<dbReference type="EC" id="1.1.1.205" evidence="1"/>
<dbReference type="EMBL" id="AE010300">
    <property type="protein sequence ID" value="AAN49185.1"/>
    <property type="molecule type" value="Genomic_DNA"/>
</dbReference>
<dbReference type="RefSeq" id="NP_712167.1">
    <property type="nucleotide sequence ID" value="NC_004342.2"/>
</dbReference>
<dbReference type="RefSeq" id="WP_000070955.1">
    <property type="nucleotide sequence ID" value="NC_004342.2"/>
</dbReference>
<dbReference type="SMR" id="Q8F4Q4"/>
<dbReference type="FunCoup" id="Q8F4Q4">
    <property type="interactions" value="370"/>
</dbReference>
<dbReference type="STRING" id="189518.LA_1986"/>
<dbReference type="PaxDb" id="189518-LA_1986"/>
<dbReference type="EnsemblBacteria" id="AAN49185">
    <property type="protein sequence ID" value="AAN49185"/>
    <property type="gene ID" value="LA_1986"/>
</dbReference>
<dbReference type="GeneID" id="61141814"/>
<dbReference type="KEGG" id="lil:LA_1986"/>
<dbReference type="PATRIC" id="fig|189518.3.peg.1979"/>
<dbReference type="HOGENOM" id="CLU_022552_2_1_12"/>
<dbReference type="InParanoid" id="Q8F4Q4"/>
<dbReference type="OrthoDB" id="9805398at2"/>
<dbReference type="UniPathway" id="UPA00601">
    <property type="reaction ID" value="UER00295"/>
</dbReference>
<dbReference type="Proteomes" id="UP000001408">
    <property type="component" value="Chromosome I"/>
</dbReference>
<dbReference type="GO" id="GO:0003938">
    <property type="term" value="F:IMP dehydrogenase activity"/>
    <property type="evidence" value="ECO:0000318"/>
    <property type="project" value="GO_Central"/>
</dbReference>
<dbReference type="GO" id="GO:0046872">
    <property type="term" value="F:metal ion binding"/>
    <property type="evidence" value="ECO:0007669"/>
    <property type="project" value="UniProtKB-UniRule"/>
</dbReference>
<dbReference type="GO" id="GO:0000166">
    <property type="term" value="F:nucleotide binding"/>
    <property type="evidence" value="ECO:0007669"/>
    <property type="project" value="UniProtKB-UniRule"/>
</dbReference>
<dbReference type="GO" id="GO:0006177">
    <property type="term" value="P:GMP biosynthetic process"/>
    <property type="evidence" value="ECO:0007669"/>
    <property type="project" value="UniProtKB-UniRule"/>
</dbReference>
<dbReference type="GO" id="GO:0006183">
    <property type="term" value="P:GTP biosynthetic process"/>
    <property type="evidence" value="ECO:0000318"/>
    <property type="project" value="GO_Central"/>
</dbReference>
<dbReference type="CDD" id="cd04601">
    <property type="entry name" value="CBS_pair_IMPDH"/>
    <property type="match status" value="1"/>
</dbReference>
<dbReference type="CDD" id="cd00381">
    <property type="entry name" value="IMPDH"/>
    <property type="match status" value="1"/>
</dbReference>
<dbReference type="FunFam" id="3.20.20.70:FF:000086">
    <property type="entry name" value="IMP dehydrogenase, putative"/>
    <property type="match status" value="1"/>
</dbReference>
<dbReference type="Gene3D" id="3.20.20.70">
    <property type="entry name" value="Aldolase class I"/>
    <property type="match status" value="1"/>
</dbReference>
<dbReference type="HAMAP" id="MF_01964">
    <property type="entry name" value="IMPDH"/>
    <property type="match status" value="1"/>
</dbReference>
<dbReference type="InterPro" id="IPR013785">
    <property type="entry name" value="Aldolase_TIM"/>
</dbReference>
<dbReference type="InterPro" id="IPR000644">
    <property type="entry name" value="CBS_dom"/>
</dbReference>
<dbReference type="InterPro" id="IPR046342">
    <property type="entry name" value="CBS_dom_sf"/>
</dbReference>
<dbReference type="InterPro" id="IPR005990">
    <property type="entry name" value="IMP_DH"/>
</dbReference>
<dbReference type="InterPro" id="IPR015875">
    <property type="entry name" value="IMP_DH/GMP_Rdtase_CS"/>
</dbReference>
<dbReference type="InterPro" id="IPR001093">
    <property type="entry name" value="IMP_DH_GMPRt"/>
</dbReference>
<dbReference type="NCBIfam" id="TIGR01302">
    <property type="entry name" value="IMP_dehydrog"/>
    <property type="match status" value="1"/>
</dbReference>
<dbReference type="PANTHER" id="PTHR11911:SF111">
    <property type="entry name" value="INOSINE-5'-MONOPHOSPHATE DEHYDROGENASE"/>
    <property type="match status" value="1"/>
</dbReference>
<dbReference type="PANTHER" id="PTHR11911">
    <property type="entry name" value="INOSINE-5-MONOPHOSPHATE DEHYDROGENASE RELATED"/>
    <property type="match status" value="1"/>
</dbReference>
<dbReference type="Pfam" id="PF00571">
    <property type="entry name" value="CBS"/>
    <property type="match status" value="1"/>
</dbReference>
<dbReference type="Pfam" id="PF00478">
    <property type="entry name" value="IMPDH"/>
    <property type="match status" value="1"/>
</dbReference>
<dbReference type="PIRSF" id="PIRSF000130">
    <property type="entry name" value="IMPDH"/>
    <property type="match status" value="1"/>
</dbReference>
<dbReference type="SMART" id="SM00116">
    <property type="entry name" value="CBS"/>
    <property type="match status" value="2"/>
</dbReference>
<dbReference type="SMART" id="SM01240">
    <property type="entry name" value="IMPDH"/>
    <property type="match status" value="1"/>
</dbReference>
<dbReference type="SUPFAM" id="SSF54631">
    <property type="entry name" value="CBS-domain pair"/>
    <property type="match status" value="1"/>
</dbReference>
<dbReference type="SUPFAM" id="SSF51412">
    <property type="entry name" value="Inosine monophosphate dehydrogenase (IMPDH)"/>
    <property type="match status" value="1"/>
</dbReference>
<dbReference type="PROSITE" id="PS51371">
    <property type="entry name" value="CBS"/>
    <property type="match status" value="2"/>
</dbReference>
<dbReference type="PROSITE" id="PS00487">
    <property type="entry name" value="IMP_DH_GMP_RED"/>
    <property type="match status" value="1"/>
</dbReference>
<sequence length="508" mass="55881">MSNQTYRDSEYLDGLSGEELFNLQIGLTYRDFLVLPGFIDFHPSEVELETRLTRNIKLKRPFISSPMDTVTESQMAIAQALMGGIGIIHYNNTIEEQVALVEKVKRFENGFITDPVILGPKNVIRDLDAIKERKGFTGIPVTEDGTRNSKLIGIVTNRDIDFEKNREITLDKVMTTNLITGKEGITLQDANEIIKKSKIGKLPIVDSQGKLVSLVSRSDLKKNKEFPDASKDERKRLRCGAAVSTLLESRDRVAALYEAGVDVIIIDSAQGNSNYQIEMIQFIKKEFKNLDIVAGNVVTRAQAENLIRAGADGLRIGMGPGSICITQDTMAVGRAQATAIYQTAKHSAKYDVPVIADGGISNIGDIANSLAIGASTCMMGFMFAGTTEAPGEYFYENGIRLKKYRGMASIEAMKAGGDKRYFNEGQKVKVAQGVSGSVVDRGSILNFIPYLSQGLRLSFQDMGYKSIPEIHKALRDGKLRFERRSESAQAQGSVHGLYSFSAPTMRAE</sequence>
<keyword id="KW-0129">CBS domain</keyword>
<keyword id="KW-0332">GMP biosynthesis</keyword>
<keyword id="KW-0479">Metal-binding</keyword>
<keyword id="KW-0520">NAD</keyword>
<keyword id="KW-0560">Oxidoreductase</keyword>
<keyword id="KW-0630">Potassium</keyword>
<keyword id="KW-0658">Purine biosynthesis</keyword>
<keyword id="KW-1185">Reference proteome</keyword>
<keyword id="KW-0677">Repeat</keyword>
<feature type="chain" id="PRO_0000415689" description="Inosine-5'-monophosphate dehydrogenase">
    <location>
        <begin position="1"/>
        <end position="508"/>
    </location>
</feature>
<feature type="domain" description="CBS 1" evidence="1">
    <location>
        <begin position="111"/>
        <end position="170"/>
    </location>
</feature>
<feature type="domain" description="CBS 2" evidence="1">
    <location>
        <begin position="174"/>
        <end position="230"/>
    </location>
</feature>
<feature type="active site" description="Thioimidate intermediate" evidence="1">
    <location>
        <position position="324"/>
    </location>
</feature>
<feature type="active site" description="Proton acceptor" evidence="1">
    <location>
        <position position="420"/>
    </location>
</feature>
<feature type="binding site" evidence="1">
    <location>
        <position position="267"/>
    </location>
    <ligand>
        <name>NAD(+)</name>
        <dbReference type="ChEBI" id="CHEBI:57540"/>
    </ligand>
</feature>
<feature type="binding site" evidence="1">
    <location>
        <begin position="317"/>
        <end position="319"/>
    </location>
    <ligand>
        <name>NAD(+)</name>
        <dbReference type="ChEBI" id="CHEBI:57540"/>
    </ligand>
</feature>
<feature type="binding site" description="in other chain" evidence="1">
    <location>
        <position position="319"/>
    </location>
    <ligand>
        <name>K(+)</name>
        <dbReference type="ChEBI" id="CHEBI:29103"/>
        <note>ligand shared between two tetrameric partners</note>
    </ligand>
</feature>
<feature type="binding site" description="in other chain" evidence="1">
    <location>
        <position position="321"/>
    </location>
    <ligand>
        <name>K(+)</name>
        <dbReference type="ChEBI" id="CHEBI:29103"/>
        <note>ligand shared between two tetrameric partners</note>
    </ligand>
</feature>
<feature type="binding site" evidence="1">
    <location>
        <position position="322"/>
    </location>
    <ligand>
        <name>IMP</name>
        <dbReference type="ChEBI" id="CHEBI:58053"/>
    </ligand>
</feature>
<feature type="binding site" description="in other chain" evidence="1">
    <location>
        <position position="324"/>
    </location>
    <ligand>
        <name>K(+)</name>
        <dbReference type="ChEBI" id="CHEBI:29103"/>
        <note>ligand shared between two tetrameric partners</note>
    </ligand>
</feature>
<feature type="binding site" evidence="1">
    <location>
        <begin position="357"/>
        <end position="359"/>
    </location>
    <ligand>
        <name>IMP</name>
        <dbReference type="ChEBI" id="CHEBI:58053"/>
    </ligand>
</feature>
<feature type="binding site" evidence="1">
    <location>
        <begin position="380"/>
        <end position="381"/>
    </location>
    <ligand>
        <name>IMP</name>
        <dbReference type="ChEBI" id="CHEBI:58053"/>
    </ligand>
</feature>
<feature type="binding site" evidence="1">
    <location>
        <begin position="404"/>
        <end position="408"/>
    </location>
    <ligand>
        <name>IMP</name>
        <dbReference type="ChEBI" id="CHEBI:58053"/>
    </ligand>
</feature>
<feature type="binding site" evidence="1">
    <location>
        <position position="432"/>
    </location>
    <ligand>
        <name>IMP</name>
        <dbReference type="ChEBI" id="CHEBI:58053"/>
    </ligand>
</feature>
<feature type="binding site" evidence="1">
    <location>
        <position position="492"/>
    </location>
    <ligand>
        <name>K(+)</name>
        <dbReference type="ChEBI" id="CHEBI:29103"/>
        <note>ligand shared between two tetrameric partners</note>
    </ligand>
</feature>
<comment type="function">
    <text evidence="1">Catalyzes the conversion of inosine 5'-phosphate (IMP) to xanthosine 5'-phosphate (XMP), the first committed and rate-limiting step in the de novo synthesis of guanine nucleotides, and therefore plays an important role in the regulation of cell growth.</text>
</comment>
<comment type="catalytic activity">
    <reaction evidence="1">
        <text>IMP + NAD(+) + H2O = XMP + NADH + H(+)</text>
        <dbReference type="Rhea" id="RHEA:11708"/>
        <dbReference type="ChEBI" id="CHEBI:15377"/>
        <dbReference type="ChEBI" id="CHEBI:15378"/>
        <dbReference type="ChEBI" id="CHEBI:57464"/>
        <dbReference type="ChEBI" id="CHEBI:57540"/>
        <dbReference type="ChEBI" id="CHEBI:57945"/>
        <dbReference type="ChEBI" id="CHEBI:58053"/>
        <dbReference type="EC" id="1.1.1.205"/>
    </reaction>
</comment>
<comment type="cofactor">
    <cofactor evidence="1">
        <name>K(+)</name>
        <dbReference type="ChEBI" id="CHEBI:29103"/>
    </cofactor>
</comment>
<comment type="activity regulation">
    <text evidence="1">Mycophenolic acid (MPA) is a non-competitive inhibitor that prevents formation of the closed enzyme conformation by binding to the same site as the amobile flap. In contrast, mizoribine monophosphate (MZP) is a competitive inhibitor that induces the closed conformation. MPA is a potent inhibitor of mammalian IMPDHs but a poor inhibitor of the bacterial enzymes. MZP is a more potent inhibitor of bacterial IMPDH.</text>
</comment>
<comment type="pathway">
    <text evidence="1">Purine metabolism; XMP biosynthesis via de novo pathway; XMP from IMP: step 1/1.</text>
</comment>
<comment type="subunit">
    <text evidence="1">Homotetramer.</text>
</comment>
<comment type="similarity">
    <text evidence="1">Belongs to the IMPDH/GMPR family.</text>
</comment>
<reference key="1">
    <citation type="journal article" date="2003" name="Nature">
        <title>Unique physiological and pathogenic features of Leptospira interrogans revealed by whole-genome sequencing.</title>
        <authorList>
            <person name="Ren S.-X."/>
            <person name="Fu G."/>
            <person name="Jiang X.-G."/>
            <person name="Zeng R."/>
            <person name="Miao Y.-G."/>
            <person name="Xu H."/>
            <person name="Zhang Y.-X."/>
            <person name="Xiong H."/>
            <person name="Lu G."/>
            <person name="Lu L.-F."/>
            <person name="Jiang H.-Q."/>
            <person name="Jia J."/>
            <person name="Tu Y.-F."/>
            <person name="Jiang J.-X."/>
            <person name="Gu W.-Y."/>
            <person name="Zhang Y.-Q."/>
            <person name="Cai Z."/>
            <person name="Sheng H.-H."/>
            <person name="Yin H.-F."/>
            <person name="Zhang Y."/>
            <person name="Zhu G.-F."/>
            <person name="Wan M."/>
            <person name="Huang H.-L."/>
            <person name="Qian Z."/>
            <person name="Wang S.-Y."/>
            <person name="Ma W."/>
            <person name="Yao Z.-J."/>
            <person name="Shen Y."/>
            <person name="Qiang B.-Q."/>
            <person name="Xia Q.-C."/>
            <person name="Guo X.-K."/>
            <person name="Danchin A."/>
            <person name="Saint Girons I."/>
            <person name="Somerville R.L."/>
            <person name="Wen Y.-M."/>
            <person name="Shi M.-H."/>
            <person name="Chen Z."/>
            <person name="Xu J.-G."/>
            <person name="Zhao G.-P."/>
        </authorList>
    </citation>
    <scope>NUCLEOTIDE SEQUENCE [LARGE SCALE GENOMIC DNA]</scope>
    <source>
        <strain>56601</strain>
    </source>
</reference>
<evidence type="ECO:0000255" key="1">
    <source>
        <dbReference type="HAMAP-Rule" id="MF_01964"/>
    </source>
</evidence>
<organism>
    <name type="scientific">Leptospira interrogans serogroup Icterohaemorrhagiae serovar Lai (strain 56601)</name>
    <dbReference type="NCBI Taxonomy" id="189518"/>
    <lineage>
        <taxon>Bacteria</taxon>
        <taxon>Pseudomonadati</taxon>
        <taxon>Spirochaetota</taxon>
        <taxon>Spirochaetia</taxon>
        <taxon>Leptospirales</taxon>
        <taxon>Leptospiraceae</taxon>
        <taxon>Leptospira</taxon>
    </lineage>
</organism>
<proteinExistence type="inferred from homology"/>
<gene>
    <name evidence="1" type="primary">guaB</name>
    <name type="ordered locus">LA_1986</name>
</gene>
<protein>
    <recommendedName>
        <fullName evidence="1">Inosine-5'-monophosphate dehydrogenase</fullName>
        <shortName evidence="1">IMP dehydrogenase</shortName>
        <shortName evidence="1">IMPD</shortName>
        <shortName evidence="1">IMPDH</shortName>
        <ecNumber evidence="1">1.1.1.205</ecNumber>
    </recommendedName>
</protein>
<name>IMDH_LEPIN</name>
<accession>Q8F4Q4</accession>